<protein>
    <recommendedName>
        <fullName evidence="1">UPF0178 protein YPTS_2857</fullName>
    </recommendedName>
</protein>
<accession>B2K963</accession>
<gene>
    <name type="ordered locus">YPTS_2857</name>
</gene>
<proteinExistence type="inferred from homology"/>
<reference key="1">
    <citation type="submission" date="2008-04" db="EMBL/GenBank/DDBJ databases">
        <title>Complete sequence of Yersinia pseudotuberculosis PB1/+.</title>
        <authorList>
            <person name="Copeland A."/>
            <person name="Lucas S."/>
            <person name="Lapidus A."/>
            <person name="Glavina del Rio T."/>
            <person name="Dalin E."/>
            <person name="Tice H."/>
            <person name="Bruce D."/>
            <person name="Goodwin L."/>
            <person name="Pitluck S."/>
            <person name="Munk A.C."/>
            <person name="Brettin T."/>
            <person name="Detter J.C."/>
            <person name="Han C."/>
            <person name="Tapia R."/>
            <person name="Schmutz J."/>
            <person name="Larimer F."/>
            <person name="Land M."/>
            <person name="Hauser L."/>
            <person name="Challacombe J.F."/>
            <person name="Green L."/>
            <person name="Lindler L.E."/>
            <person name="Nikolich M.P."/>
            <person name="Richardson P."/>
        </authorList>
    </citation>
    <scope>NUCLEOTIDE SEQUENCE [LARGE SCALE GENOMIC DNA]</scope>
    <source>
        <strain>PB1/+</strain>
    </source>
</reference>
<comment type="similarity">
    <text evidence="1">Belongs to the UPF0178 family.</text>
</comment>
<evidence type="ECO:0000255" key="1">
    <source>
        <dbReference type="HAMAP-Rule" id="MF_00489"/>
    </source>
</evidence>
<dbReference type="EMBL" id="CP001048">
    <property type="protein sequence ID" value="ACC89814.1"/>
    <property type="molecule type" value="Genomic_DNA"/>
</dbReference>
<dbReference type="RefSeq" id="WP_002208527.1">
    <property type="nucleotide sequence ID" value="NZ_CP009780.1"/>
</dbReference>
<dbReference type="KEGG" id="ypb:YPTS_2857"/>
<dbReference type="PATRIC" id="fig|502801.10.peg.2285"/>
<dbReference type="CDD" id="cd18720">
    <property type="entry name" value="PIN_YqxD-like"/>
    <property type="match status" value="1"/>
</dbReference>
<dbReference type="HAMAP" id="MF_00489">
    <property type="entry name" value="UPF0178"/>
    <property type="match status" value="1"/>
</dbReference>
<dbReference type="InterPro" id="IPR003791">
    <property type="entry name" value="UPF0178"/>
</dbReference>
<dbReference type="NCBIfam" id="NF001095">
    <property type="entry name" value="PRK00124.1"/>
    <property type="match status" value="1"/>
</dbReference>
<dbReference type="PANTHER" id="PTHR35146">
    <property type="entry name" value="UPF0178 PROTEIN YAII"/>
    <property type="match status" value="1"/>
</dbReference>
<dbReference type="PANTHER" id="PTHR35146:SF1">
    <property type="entry name" value="UPF0178 PROTEIN YAII"/>
    <property type="match status" value="1"/>
</dbReference>
<dbReference type="Pfam" id="PF02639">
    <property type="entry name" value="DUF188"/>
    <property type="match status" value="1"/>
</dbReference>
<name>Y2857_YERPB</name>
<organism>
    <name type="scientific">Yersinia pseudotuberculosis serotype IB (strain PB1/+)</name>
    <dbReference type="NCBI Taxonomy" id="502801"/>
    <lineage>
        <taxon>Bacteria</taxon>
        <taxon>Pseudomonadati</taxon>
        <taxon>Pseudomonadota</taxon>
        <taxon>Gammaproteobacteria</taxon>
        <taxon>Enterobacterales</taxon>
        <taxon>Yersiniaceae</taxon>
        <taxon>Yersinia</taxon>
    </lineage>
</organism>
<sequence>MQIWVDADACPNVIKEVLFRAADRTGMMVTLVANQPLKTPPSKFIRTVQVASGFDVADNEIVQRVEKNDLVITADIPLAAEVIEKGGIALNPRGERYTPDTIRERLNMRDFMDTMRASGIQTGGPNTLNQRDRQQFANELDKWLQQARNQAK</sequence>
<feature type="chain" id="PRO_1000126219" description="UPF0178 protein YPTS_2857">
    <location>
        <begin position="1"/>
        <end position="152"/>
    </location>
</feature>